<accession>B7M5T9</accession>
<sequence>MKSVRYLIGLFAFIACYYLLPISTRLLWQPDETRYAEISREMLASGDWIVPHLLGLRYFEKPIAGYWINSIGQWLFGANNFGVRAGVIFATLLTAALVTWFTLRLWRDKRLALLATVIYLSLFIVYAIGTYAVLDPFIAFWLVAGMCSFWLAMQAQAWKGKSAGFLLLGITCGMGVMTKGFLALAVPVLSVLPWVATQKRWKDLFIYGWLAVISCVLTVLPWGLAIAQREPDFWHYFFWVEHIQRFALDDAQHRAPFWYYVPVIIAGSLPWLGLLPGALYTGWKNRKHSATVYLLSWTIMPLLFFSVAKGKLPTYILSCFAPLAMLMAHYALLAAKNNPLALRINGWINIAFGVTGIIATFVVSPWGPMNTPVWQTFESYKVFCAWSIFSLWAFFGWYTLTNVEKTWPFAALCPLGLALLVGFSIPDRVMEGKHPQFFVEMTQESLQPSRYILTDSVGVAAGLAWSLQRDDIIMYRQTGELKYGLNYPDAKGRFVSGDEFANWLNQHRQEGIITLVLSVDRDEDINSLAIPPADAIDRQERLVLIQYRPK</sequence>
<organism>
    <name type="scientific">Escherichia coli O8 (strain IAI1)</name>
    <dbReference type="NCBI Taxonomy" id="585034"/>
    <lineage>
        <taxon>Bacteria</taxon>
        <taxon>Pseudomonadati</taxon>
        <taxon>Pseudomonadota</taxon>
        <taxon>Gammaproteobacteria</taxon>
        <taxon>Enterobacterales</taxon>
        <taxon>Enterobacteriaceae</taxon>
        <taxon>Escherichia</taxon>
    </lineage>
</organism>
<evidence type="ECO:0000255" key="1">
    <source>
        <dbReference type="HAMAP-Rule" id="MF_01165"/>
    </source>
</evidence>
<gene>
    <name evidence="1" type="primary">arnT</name>
    <name type="ordered locus">ECIAI1_2334</name>
</gene>
<reference key="1">
    <citation type="journal article" date="2009" name="PLoS Genet.">
        <title>Organised genome dynamics in the Escherichia coli species results in highly diverse adaptive paths.</title>
        <authorList>
            <person name="Touchon M."/>
            <person name="Hoede C."/>
            <person name="Tenaillon O."/>
            <person name="Barbe V."/>
            <person name="Baeriswyl S."/>
            <person name="Bidet P."/>
            <person name="Bingen E."/>
            <person name="Bonacorsi S."/>
            <person name="Bouchier C."/>
            <person name="Bouvet O."/>
            <person name="Calteau A."/>
            <person name="Chiapello H."/>
            <person name="Clermont O."/>
            <person name="Cruveiller S."/>
            <person name="Danchin A."/>
            <person name="Diard M."/>
            <person name="Dossat C."/>
            <person name="Karoui M.E."/>
            <person name="Frapy E."/>
            <person name="Garry L."/>
            <person name="Ghigo J.M."/>
            <person name="Gilles A.M."/>
            <person name="Johnson J."/>
            <person name="Le Bouguenec C."/>
            <person name="Lescat M."/>
            <person name="Mangenot S."/>
            <person name="Martinez-Jehanne V."/>
            <person name="Matic I."/>
            <person name="Nassif X."/>
            <person name="Oztas S."/>
            <person name="Petit M.A."/>
            <person name="Pichon C."/>
            <person name="Rouy Z."/>
            <person name="Ruf C.S."/>
            <person name="Schneider D."/>
            <person name="Tourret J."/>
            <person name="Vacherie B."/>
            <person name="Vallenet D."/>
            <person name="Medigue C."/>
            <person name="Rocha E.P.C."/>
            <person name="Denamur E."/>
        </authorList>
    </citation>
    <scope>NUCLEOTIDE SEQUENCE [LARGE SCALE GENOMIC DNA]</scope>
    <source>
        <strain>IAI1</strain>
    </source>
</reference>
<dbReference type="EC" id="2.4.2.43" evidence="1"/>
<dbReference type="EMBL" id="CU928160">
    <property type="protein sequence ID" value="CAQ99176.1"/>
    <property type="molecule type" value="Genomic_DNA"/>
</dbReference>
<dbReference type="RefSeq" id="WP_000844026.1">
    <property type="nucleotide sequence ID" value="NC_011741.1"/>
</dbReference>
<dbReference type="SMR" id="B7M5T9"/>
<dbReference type="CAZy" id="GT83">
    <property type="family name" value="Glycosyltransferase Family 83"/>
</dbReference>
<dbReference type="KEGG" id="ecr:ECIAI1_2334"/>
<dbReference type="HOGENOM" id="CLU_019200_2_1_6"/>
<dbReference type="UniPathway" id="UPA00037"/>
<dbReference type="GO" id="GO:0005886">
    <property type="term" value="C:plasma membrane"/>
    <property type="evidence" value="ECO:0007669"/>
    <property type="project" value="UniProtKB-SubCell"/>
</dbReference>
<dbReference type="GO" id="GO:0103015">
    <property type="term" value="F:4-amino-4-deoxy-L-arabinose transferase activity"/>
    <property type="evidence" value="ECO:0007669"/>
    <property type="project" value="UniProtKB-EC"/>
</dbReference>
<dbReference type="GO" id="GO:0000030">
    <property type="term" value="F:mannosyltransferase activity"/>
    <property type="evidence" value="ECO:0007669"/>
    <property type="project" value="InterPro"/>
</dbReference>
<dbReference type="GO" id="GO:0009245">
    <property type="term" value="P:lipid A biosynthetic process"/>
    <property type="evidence" value="ECO:0007669"/>
    <property type="project" value="UniProtKB-UniRule"/>
</dbReference>
<dbReference type="GO" id="GO:0009103">
    <property type="term" value="P:lipopolysaccharide biosynthetic process"/>
    <property type="evidence" value="ECO:0007669"/>
    <property type="project" value="UniProtKB-KW"/>
</dbReference>
<dbReference type="GO" id="GO:0006493">
    <property type="term" value="P:protein O-linked glycosylation"/>
    <property type="evidence" value="ECO:0007669"/>
    <property type="project" value="InterPro"/>
</dbReference>
<dbReference type="GO" id="GO:0010041">
    <property type="term" value="P:response to iron(III) ion"/>
    <property type="evidence" value="ECO:0007669"/>
    <property type="project" value="TreeGrafter"/>
</dbReference>
<dbReference type="HAMAP" id="MF_01165">
    <property type="entry name" value="ArnT_transfer"/>
    <property type="match status" value="1"/>
</dbReference>
<dbReference type="InterPro" id="IPR022839">
    <property type="entry name" value="ArnT_tfrase"/>
</dbReference>
<dbReference type="InterPro" id="IPR003342">
    <property type="entry name" value="Glyco_trans_39/83"/>
</dbReference>
<dbReference type="InterPro" id="IPR050297">
    <property type="entry name" value="LipidA_mod_glycosyltrf_83"/>
</dbReference>
<dbReference type="NCBIfam" id="NF009784">
    <property type="entry name" value="PRK13279.1"/>
    <property type="match status" value="1"/>
</dbReference>
<dbReference type="PANTHER" id="PTHR33908">
    <property type="entry name" value="MANNOSYLTRANSFERASE YKCB-RELATED"/>
    <property type="match status" value="1"/>
</dbReference>
<dbReference type="PANTHER" id="PTHR33908:SF3">
    <property type="entry name" value="UNDECAPRENYL PHOSPHATE-ALPHA-4-AMINO-4-DEOXY-L-ARABINOSE ARABINOSYL TRANSFERASE"/>
    <property type="match status" value="1"/>
</dbReference>
<dbReference type="Pfam" id="PF02366">
    <property type="entry name" value="PMT"/>
    <property type="match status" value="1"/>
</dbReference>
<feature type="chain" id="PRO_0000380001" description="Undecaprenyl phosphate-alpha-4-amino-4-deoxy-L-arabinose arabinosyl transferase">
    <location>
        <begin position="1"/>
        <end position="550"/>
    </location>
</feature>
<feature type="transmembrane region" description="Helical" evidence="1">
    <location>
        <begin position="7"/>
        <end position="27"/>
    </location>
</feature>
<feature type="transmembrane region" description="Helical" evidence="1">
    <location>
        <begin position="81"/>
        <end position="101"/>
    </location>
</feature>
<feature type="transmembrane region" description="Helical" evidence="1">
    <location>
        <begin position="111"/>
        <end position="133"/>
    </location>
</feature>
<feature type="transmembrane region" description="Helical" evidence="1">
    <location>
        <begin position="137"/>
        <end position="154"/>
    </location>
</feature>
<feature type="transmembrane region" description="Helical" evidence="1">
    <location>
        <begin position="165"/>
        <end position="185"/>
    </location>
</feature>
<feature type="transmembrane region" description="Helical" evidence="1">
    <location>
        <begin position="204"/>
        <end position="224"/>
    </location>
</feature>
<feature type="transmembrane region" description="Helical" evidence="1">
    <location>
        <begin position="255"/>
        <end position="275"/>
    </location>
</feature>
<feature type="transmembrane region" description="Helical" evidence="1">
    <location>
        <begin position="288"/>
        <end position="308"/>
    </location>
</feature>
<feature type="transmembrane region" description="Helical" evidence="1">
    <location>
        <begin position="315"/>
        <end position="335"/>
    </location>
</feature>
<feature type="transmembrane region" description="Helical" evidence="1">
    <location>
        <begin position="346"/>
        <end position="366"/>
    </location>
</feature>
<feature type="transmembrane region" description="Helical" evidence="1">
    <location>
        <begin position="382"/>
        <end position="402"/>
    </location>
</feature>
<feature type="transmembrane region" description="Helical" evidence="1">
    <location>
        <begin position="406"/>
        <end position="426"/>
    </location>
</feature>
<proteinExistence type="inferred from homology"/>
<protein>
    <recommendedName>
        <fullName evidence="1">Undecaprenyl phosphate-alpha-4-amino-4-deoxy-L-arabinose arabinosyl transferase</fullName>
        <ecNumber evidence="1">2.4.2.43</ecNumber>
    </recommendedName>
    <alternativeName>
        <fullName evidence="1">4-amino-4-deoxy-L-arabinose lipid A transferase</fullName>
    </alternativeName>
    <alternativeName>
        <fullName evidence="1">Lipid IV(A) 4-amino-4-deoxy-L-arabinosyltransferase</fullName>
    </alternativeName>
    <alternativeName>
        <fullName evidence="1">Undecaprenyl phosphate-alpha-L-Ara4N transferase</fullName>
    </alternativeName>
</protein>
<name>ARNT_ECO8A</name>
<keyword id="KW-0997">Cell inner membrane</keyword>
<keyword id="KW-1003">Cell membrane</keyword>
<keyword id="KW-0328">Glycosyltransferase</keyword>
<keyword id="KW-0441">Lipid A biosynthesis</keyword>
<keyword id="KW-0444">Lipid biosynthesis</keyword>
<keyword id="KW-0443">Lipid metabolism</keyword>
<keyword id="KW-0448">Lipopolysaccharide biosynthesis</keyword>
<keyword id="KW-0472">Membrane</keyword>
<keyword id="KW-0808">Transferase</keyword>
<keyword id="KW-0812">Transmembrane</keyword>
<keyword id="KW-1133">Transmembrane helix</keyword>
<comment type="function">
    <text evidence="1">Catalyzes the transfer of the L-Ara4N moiety of the glycolipid undecaprenyl phosphate-alpha-L-Ara4N to lipid A. The modified arabinose is attached to lipid A and is required for resistance to polymyxin and cationic antimicrobial peptides.</text>
</comment>
<comment type="catalytic activity">
    <reaction evidence="1">
        <text>4-amino-4-deoxy-alpha-L-arabinopyranosyl di-trans,octa-cis-undecaprenyl phosphate + lipid IVA = lipid IIA + di-trans,octa-cis-undecaprenyl phosphate.</text>
        <dbReference type="EC" id="2.4.2.43"/>
    </reaction>
</comment>
<comment type="pathway">
    <text evidence="1">Lipopolysaccharide metabolism; 4-amino-4-deoxy-beta-L-arabinose-lipid A biosynthesis.</text>
</comment>
<comment type="subcellular location">
    <subcellularLocation>
        <location evidence="1">Cell inner membrane</location>
        <topology evidence="1">Multi-pass membrane protein</topology>
    </subcellularLocation>
</comment>
<comment type="similarity">
    <text evidence="1">Belongs to the glycosyltransferase 83 family.</text>
</comment>